<accession>A4QLG5</accession>
<geneLocation type="chloroplast"/>
<organism>
    <name type="scientific">Lepidium virginicum</name>
    <name type="common">Virginia pepperweed</name>
    <dbReference type="NCBI Taxonomy" id="59292"/>
    <lineage>
        <taxon>Eukaryota</taxon>
        <taxon>Viridiplantae</taxon>
        <taxon>Streptophyta</taxon>
        <taxon>Embryophyta</taxon>
        <taxon>Tracheophyta</taxon>
        <taxon>Spermatophyta</taxon>
        <taxon>Magnoliopsida</taxon>
        <taxon>eudicotyledons</taxon>
        <taxon>Gunneridae</taxon>
        <taxon>Pentapetalae</taxon>
        <taxon>rosids</taxon>
        <taxon>malvids</taxon>
        <taxon>Brassicales</taxon>
        <taxon>Brassicaceae</taxon>
        <taxon>Lepidieae</taxon>
        <taxon>Lepidium</taxon>
    </lineage>
</organism>
<evidence type="ECO:0000255" key="1">
    <source>
        <dbReference type="HAMAP-Rule" id="MF_01358"/>
    </source>
</evidence>
<reference key="1">
    <citation type="submission" date="2007-03" db="EMBL/GenBank/DDBJ databases">
        <title>Sequencing analysis of Lepidium virginicum JO26 chloroplast DNA.</title>
        <authorList>
            <person name="Hosouchi T."/>
            <person name="Tsuruoka H."/>
            <person name="Kotani H."/>
        </authorList>
    </citation>
    <scope>NUCLEOTIDE SEQUENCE [LARGE SCALE GENOMIC DNA]</scope>
</reference>
<gene>
    <name evidence="1" type="primary">ndhH</name>
</gene>
<sequence length="393" mass="45505">MKRPVTGKDLMIVNMGPHHPSMHGVLRLIVTLDGEDVVDCEPILGYLHRGMEKIAENRAIIQYLPYVTRWDYLATMFTEAITVNGPEQLGNIQVPKRASYIRVIMLELSRIASHLLWLGPFMADIGAQTPFFYIFREREFVYDLFEAATGMRMMHNFFRIGGIAADLPYGWIDKCLDFCDYFLTEVVEYQKLITRNPIFLERVEGVGIIGGEEAINWGLSGPMLRASGIPWDLRKVDRYESYDEFEWEIQWQKQGDSLARYLVRLSEMTESIKIIQQALEGLPGGPYENLESRSFDRKRNPEWNDFDYRFISKKPSPTFELSKQELYVRVEAPKGELGIFLIGDQSGFPWRWKIRPPGFINLQILPELVKRMKLADIMTILGSIDIIMGEVDR</sequence>
<feature type="chain" id="PRO_0000358000" description="NAD(P)H-quinone oxidoreductase subunit H, chloroplastic">
    <location>
        <begin position="1"/>
        <end position="393"/>
    </location>
</feature>
<keyword id="KW-0150">Chloroplast</keyword>
<keyword id="KW-0472">Membrane</keyword>
<keyword id="KW-0520">NAD</keyword>
<keyword id="KW-0521">NADP</keyword>
<keyword id="KW-0934">Plastid</keyword>
<keyword id="KW-0618">Plastoquinone</keyword>
<keyword id="KW-0874">Quinone</keyword>
<keyword id="KW-0793">Thylakoid</keyword>
<keyword id="KW-1278">Translocase</keyword>
<keyword id="KW-0813">Transport</keyword>
<proteinExistence type="inferred from homology"/>
<comment type="function">
    <text evidence="1">NDH shuttles electrons from NAD(P)H:plastoquinone, via FMN and iron-sulfur (Fe-S) centers, to quinones in the photosynthetic chain and possibly in a chloroplast respiratory chain. The immediate electron acceptor for the enzyme in this species is believed to be plastoquinone. Couples the redox reaction to proton translocation, and thus conserves the redox energy in a proton gradient.</text>
</comment>
<comment type="catalytic activity">
    <reaction evidence="1">
        <text>a plastoquinone + NADH + (n+1) H(+)(in) = a plastoquinol + NAD(+) + n H(+)(out)</text>
        <dbReference type="Rhea" id="RHEA:42608"/>
        <dbReference type="Rhea" id="RHEA-COMP:9561"/>
        <dbReference type="Rhea" id="RHEA-COMP:9562"/>
        <dbReference type="ChEBI" id="CHEBI:15378"/>
        <dbReference type="ChEBI" id="CHEBI:17757"/>
        <dbReference type="ChEBI" id="CHEBI:57540"/>
        <dbReference type="ChEBI" id="CHEBI:57945"/>
        <dbReference type="ChEBI" id="CHEBI:62192"/>
    </reaction>
</comment>
<comment type="catalytic activity">
    <reaction evidence="1">
        <text>a plastoquinone + NADPH + (n+1) H(+)(in) = a plastoquinol + NADP(+) + n H(+)(out)</text>
        <dbReference type="Rhea" id="RHEA:42612"/>
        <dbReference type="Rhea" id="RHEA-COMP:9561"/>
        <dbReference type="Rhea" id="RHEA-COMP:9562"/>
        <dbReference type="ChEBI" id="CHEBI:15378"/>
        <dbReference type="ChEBI" id="CHEBI:17757"/>
        <dbReference type="ChEBI" id="CHEBI:57783"/>
        <dbReference type="ChEBI" id="CHEBI:58349"/>
        <dbReference type="ChEBI" id="CHEBI:62192"/>
    </reaction>
</comment>
<comment type="subunit">
    <text evidence="1">NDH is composed of at least 16 different subunits, 5 of which are encoded in the nucleus.</text>
</comment>
<comment type="subcellular location">
    <subcellularLocation>
        <location evidence="1">Plastid</location>
        <location evidence="1">Chloroplast thylakoid membrane</location>
        <topology evidence="1">Peripheral membrane protein</topology>
        <orientation evidence="1">Stromal side</orientation>
    </subcellularLocation>
</comment>
<comment type="similarity">
    <text evidence="1">Belongs to the complex I 49 kDa subunit family.</text>
</comment>
<name>NDHH_LEPVR</name>
<dbReference type="EC" id="7.1.1.-" evidence="1"/>
<dbReference type="EMBL" id="AP009374">
    <property type="protein sequence ID" value="BAF50520.1"/>
    <property type="molecule type" value="Genomic_DNA"/>
</dbReference>
<dbReference type="RefSeq" id="YP_001123695.1">
    <property type="nucleotide sequence ID" value="NC_009273.1"/>
</dbReference>
<dbReference type="SMR" id="A4QLG5"/>
<dbReference type="GeneID" id="4962058"/>
<dbReference type="GO" id="GO:0009535">
    <property type="term" value="C:chloroplast thylakoid membrane"/>
    <property type="evidence" value="ECO:0007669"/>
    <property type="project" value="UniProtKB-SubCell"/>
</dbReference>
<dbReference type="GO" id="GO:0051287">
    <property type="term" value="F:NAD binding"/>
    <property type="evidence" value="ECO:0007669"/>
    <property type="project" value="InterPro"/>
</dbReference>
<dbReference type="GO" id="GO:0016655">
    <property type="term" value="F:oxidoreductase activity, acting on NAD(P)H, quinone or similar compound as acceptor"/>
    <property type="evidence" value="ECO:0007669"/>
    <property type="project" value="UniProtKB-UniRule"/>
</dbReference>
<dbReference type="GO" id="GO:0048038">
    <property type="term" value="F:quinone binding"/>
    <property type="evidence" value="ECO:0007669"/>
    <property type="project" value="UniProtKB-KW"/>
</dbReference>
<dbReference type="GO" id="GO:0019684">
    <property type="term" value="P:photosynthesis, light reaction"/>
    <property type="evidence" value="ECO:0007669"/>
    <property type="project" value="UniProtKB-UniRule"/>
</dbReference>
<dbReference type="FunFam" id="1.10.645.10:FF:000003">
    <property type="entry name" value="NAD(P)H-quinone oxidoreductase subunit H, chloroplastic"/>
    <property type="match status" value="1"/>
</dbReference>
<dbReference type="Gene3D" id="1.10.645.10">
    <property type="entry name" value="Cytochrome-c3 Hydrogenase, chain B"/>
    <property type="match status" value="1"/>
</dbReference>
<dbReference type="HAMAP" id="MF_01358">
    <property type="entry name" value="NDH1_NuoD"/>
    <property type="match status" value="1"/>
</dbReference>
<dbReference type="InterPro" id="IPR001135">
    <property type="entry name" value="NADH_Q_OxRdtase_suD"/>
</dbReference>
<dbReference type="InterPro" id="IPR014029">
    <property type="entry name" value="NADH_UbQ_OxRdtase_49kDa_CS"/>
</dbReference>
<dbReference type="InterPro" id="IPR022885">
    <property type="entry name" value="NDH1_su_D/H"/>
</dbReference>
<dbReference type="InterPro" id="IPR029014">
    <property type="entry name" value="NiFe-Hase_large"/>
</dbReference>
<dbReference type="NCBIfam" id="NF004739">
    <property type="entry name" value="PRK06075.1"/>
    <property type="match status" value="1"/>
</dbReference>
<dbReference type="NCBIfam" id="NF005649">
    <property type="entry name" value="PRK07415.1"/>
    <property type="match status" value="1"/>
</dbReference>
<dbReference type="PANTHER" id="PTHR11993:SF10">
    <property type="entry name" value="NADH DEHYDROGENASE [UBIQUINONE] IRON-SULFUR PROTEIN 2, MITOCHONDRIAL"/>
    <property type="match status" value="1"/>
</dbReference>
<dbReference type="PANTHER" id="PTHR11993">
    <property type="entry name" value="NADH-UBIQUINONE OXIDOREDUCTASE 49 KDA SUBUNIT"/>
    <property type="match status" value="1"/>
</dbReference>
<dbReference type="Pfam" id="PF00346">
    <property type="entry name" value="Complex1_49kDa"/>
    <property type="match status" value="1"/>
</dbReference>
<dbReference type="SUPFAM" id="SSF56762">
    <property type="entry name" value="HydB/Nqo4-like"/>
    <property type="match status" value="1"/>
</dbReference>
<dbReference type="PROSITE" id="PS00535">
    <property type="entry name" value="COMPLEX1_49K"/>
    <property type="match status" value="1"/>
</dbReference>
<protein>
    <recommendedName>
        <fullName evidence="1">NAD(P)H-quinone oxidoreductase subunit H, chloroplastic</fullName>
        <ecNumber evidence="1">7.1.1.-</ecNumber>
    </recommendedName>
    <alternativeName>
        <fullName>NAD(P)H dehydrogenase subunit H</fullName>
    </alternativeName>
    <alternativeName>
        <fullName evidence="1">NADH-plastoquinone oxidoreductase 49 kDa subunit</fullName>
    </alternativeName>
    <alternativeName>
        <fullName evidence="1">NADH-plastoquinone oxidoreductase subunit H</fullName>
    </alternativeName>
</protein>